<organism>
    <name type="scientific">Methanococcus maripaludis (strain C5 / ATCC BAA-1333)</name>
    <dbReference type="NCBI Taxonomy" id="402880"/>
    <lineage>
        <taxon>Archaea</taxon>
        <taxon>Methanobacteriati</taxon>
        <taxon>Methanobacteriota</taxon>
        <taxon>Methanomada group</taxon>
        <taxon>Methanococci</taxon>
        <taxon>Methanococcales</taxon>
        <taxon>Methanococcaceae</taxon>
        <taxon>Methanococcus</taxon>
    </lineage>
</organism>
<reference key="1">
    <citation type="submission" date="2007-03" db="EMBL/GenBank/DDBJ databases">
        <title>Complete sequence of chromosome of Methanococcus maripaludis C5.</title>
        <authorList>
            <consortium name="US DOE Joint Genome Institute"/>
            <person name="Copeland A."/>
            <person name="Lucas S."/>
            <person name="Lapidus A."/>
            <person name="Barry K."/>
            <person name="Glavina del Rio T."/>
            <person name="Dalin E."/>
            <person name="Tice H."/>
            <person name="Pitluck S."/>
            <person name="Chertkov O."/>
            <person name="Brettin T."/>
            <person name="Bruce D."/>
            <person name="Han C."/>
            <person name="Detter J.C."/>
            <person name="Schmutz J."/>
            <person name="Larimer F."/>
            <person name="Land M."/>
            <person name="Hauser L."/>
            <person name="Kyrpides N."/>
            <person name="Mikhailova N."/>
            <person name="Sieprawska-Lupa M."/>
            <person name="Whitman W.B."/>
            <person name="Richardson P."/>
        </authorList>
    </citation>
    <scope>NUCLEOTIDE SEQUENCE [LARGE SCALE GENOMIC DNA]</scope>
    <source>
        <strain>C5 / ATCC BAA-1333</strain>
    </source>
</reference>
<keyword id="KW-0687">Ribonucleoprotein</keyword>
<keyword id="KW-0689">Ribosomal protein</keyword>
<keyword id="KW-0694">RNA-binding</keyword>
<keyword id="KW-0699">rRNA-binding</keyword>
<name>RL18A_METM5</name>
<proteinExistence type="inferred from homology"/>
<sequence>MAKIVRIKGEIIGKDEPMVFTKEYNVVKEDDALETMYSEMGSKHAVKRANIKVVEISEISEEDIQNPILKKTLEMY</sequence>
<gene>
    <name evidence="1" type="primary">rpl18a</name>
    <name evidence="1" type="synonym">rpl20e</name>
    <name evidence="1" type="synonym">rplX</name>
    <name type="ordered locus">MmarC5_1617</name>
</gene>
<comment type="subunit">
    <text evidence="1">Part of the 50S ribosomal subunit. Binds 23S rRNA.</text>
</comment>
<comment type="similarity">
    <text evidence="1">Belongs to the eukaryotic ribosomal protein eL20 family.</text>
</comment>
<feature type="chain" id="PRO_1000003667" description="Large ribosomal subunit protein eL20">
    <location>
        <begin position="1"/>
        <end position="76"/>
    </location>
</feature>
<protein>
    <recommendedName>
        <fullName evidence="1">Large ribosomal subunit protein eL20</fullName>
    </recommendedName>
    <alternativeName>
        <fullName evidence="2">50S ribosomal protein L18Ae</fullName>
    </alternativeName>
    <alternativeName>
        <fullName evidence="1">50S ribosomal protein L20e</fullName>
    </alternativeName>
    <alternativeName>
        <fullName evidence="1">50S ribosomal protein LX</fullName>
    </alternativeName>
</protein>
<evidence type="ECO:0000255" key="1">
    <source>
        <dbReference type="HAMAP-Rule" id="MF_00273"/>
    </source>
</evidence>
<evidence type="ECO:0000305" key="2"/>
<dbReference type="EMBL" id="CP000609">
    <property type="protein sequence ID" value="ABO35914.1"/>
    <property type="molecule type" value="Genomic_DNA"/>
</dbReference>
<dbReference type="RefSeq" id="WP_011869361.1">
    <property type="nucleotide sequence ID" value="NC_009135.1"/>
</dbReference>
<dbReference type="SMR" id="A4G0D0"/>
<dbReference type="STRING" id="402880.MmarC5_1617"/>
<dbReference type="GeneID" id="4928201"/>
<dbReference type="KEGG" id="mmq:MmarC5_1617"/>
<dbReference type="eggNOG" id="arCOG04175">
    <property type="taxonomic scope" value="Archaea"/>
</dbReference>
<dbReference type="HOGENOM" id="CLU_177460_0_1_2"/>
<dbReference type="OrthoDB" id="191241at2157"/>
<dbReference type="Proteomes" id="UP000000253">
    <property type="component" value="Chromosome"/>
</dbReference>
<dbReference type="GO" id="GO:1990904">
    <property type="term" value="C:ribonucleoprotein complex"/>
    <property type="evidence" value="ECO:0007669"/>
    <property type="project" value="UniProtKB-KW"/>
</dbReference>
<dbReference type="GO" id="GO:0005840">
    <property type="term" value="C:ribosome"/>
    <property type="evidence" value="ECO:0007669"/>
    <property type="project" value="UniProtKB-KW"/>
</dbReference>
<dbReference type="GO" id="GO:0070180">
    <property type="term" value="F:large ribosomal subunit rRNA binding"/>
    <property type="evidence" value="ECO:0007669"/>
    <property type="project" value="UniProtKB-UniRule"/>
</dbReference>
<dbReference type="GO" id="GO:0003735">
    <property type="term" value="F:structural constituent of ribosome"/>
    <property type="evidence" value="ECO:0007669"/>
    <property type="project" value="InterPro"/>
</dbReference>
<dbReference type="GO" id="GO:0006412">
    <property type="term" value="P:translation"/>
    <property type="evidence" value="ECO:0007669"/>
    <property type="project" value="UniProtKB-UniRule"/>
</dbReference>
<dbReference type="Gene3D" id="3.10.20.10">
    <property type="match status" value="1"/>
</dbReference>
<dbReference type="HAMAP" id="MF_00273">
    <property type="entry name" value="Ribosomal_eL20"/>
    <property type="match status" value="1"/>
</dbReference>
<dbReference type="InterPro" id="IPR028877">
    <property type="entry name" value="Ribosomal_eL20"/>
</dbReference>
<dbReference type="InterPro" id="IPR023573">
    <property type="entry name" value="Ribosomal_eL20_dom"/>
</dbReference>
<dbReference type="NCBIfam" id="NF001981">
    <property type="entry name" value="PRK00773.1-1"/>
    <property type="match status" value="1"/>
</dbReference>
<dbReference type="Pfam" id="PF01775">
    <property type="entry name" value="Ribosomal_L18A"/>
    <property type="match status" value="1"/>
</dbReference>
<dbReference type="SUPFAM" id="SSF160374">
    <property type="entry name" value="RplX-like"/>
    <property type="match status" value="1"/>
</dbReference>
<accession>A4G0D0</accession>